<keyword id="KW-0067">ATP-binding</keyword>
<keyword id="KW-0997">Cell inner membrane</keyword>
<keyword id="KW-1003">Cell membrane</keyword>
<keyword id="KW-0472">Membrane</keyword>
<keyword id="KW-0547">Nucleotide-binding</keyword>
<keyword id="KW-0592">Phosphate transport</keyword>
<keyword id="KW-1278">Translocase</keyword>
<keyword id="KW-0813">Transport</keyword>
<accession>Q1C5N7</accession>
<name>PSTB1_YERPA</name>
<dbReference type="EC" id="7.3.2.1" evidence="1"/>
<dbReference type="EMBL" id="CP000308">
    <property type="protein sequence ID" value="ABG14235.1"/>
    <property type="molecule type" value="Genomic_DNA"/>
</dbReference>
<dbReference type="SMR" id="Q1C5N7"/>
<dbReference type="KEGG" id="ypa:YPA_2270"/>
<dbReference type="Proteomes" id="UP000001971">
    <property type="component" value="Chromosome"/>
</dbReference>
<dbReference type="GO" id="GO:0005886">
    <property type="term" value="C:plasma membrane"/>
    <property type="evidence" value="ECO:0007669"/>
    <property type="project" value="UniProtKB-SubCell"/>
</dbReference>
<dbReference type="GO" id="GO:0005524">
    <property type="term" value="F:ATP binding"/>
    <property type="evidence" value="ECO:0007669"/>
    <property type="project" value="UniProtKB-KW"/>
</dbReference>
<dbReference type="GO" id="GO:0016887">
    <property type="term" value="F:ATP hydrolysis activity"/>
    <property type="evidence" value="ECO:0007669"/>
    <property type="project" value="InterPro"/>
</dbReference>
<dbReference type="GO" id="GO:0015415">
    <property type="term" value="F:ATPase-coupled phosphate ion transmembrane transporter activity"/>
    <property type="evidence" value="ECO:0007669"/>
    <property type="project" value="UniProtKB-EC"/>
</dbReference>
<dbReference type="GO" id="GO:0035435">
    <property type="term" value="P:phosphate ion transmembrane transport"/>
    <property type="evidence" value="ECO:0007669"/>
    <property type="project" value="InterPro"/>
</dbReference>
<dbReference type="CDD" id="cd03260">
    <property type="entry name" value="ABC_PstB_phosphate_transporter"/>
    <property type="match status" value="1"/>
</dbReference>
<dbReference type="FunFam" id="3.40.50.300:FF:000132">
    <property type="entry name" value="Phosphate import ATP-binding protein PstB"/>
    <property type="match status" value="1"/>
</dbReference>
<dbReference type="Gene3D" id="3.40.50.300">
    <property type="entry name" value="P-loop containing nucleotide triphosphate hydrolases"/>
    <property type="match status" value="1"/>
</dbReference>
<dbReference type="InterPro" id="IPR003593">
    <property type="entry name" value="AAA+_ATPase"/>
</dbReference>
<dbReference type="InterPro" id="IPR003439">
    <property type="entry name" value="ABC_transporter-like_ATP-bd"/>
</dbReference>
<dbReference type="InterPro" id="IPR017871">
    <property type="entry name" value="ABC_transporter-like_CS"/>
</dbReference>
<dbReference type="InterPro" id="IPR027417">
    <property type="entry name" value="P-loop_NTPase"/>
</dbReference>
<dbReference type="InterPro" id="IPR005670">
    <property type="entry name" value="PstB-like"/>
</dbReference>
<dbReference type="NCBIfam" id="TIGR00972">
    <property type="entry name" value="3a0107s01c2"/>
    <property type="match status" value="1"/>
</dbReference>
<dbReference type="PANTHER" id="PTHR43423">
    <property type="entry name" value="ABC TRANSPORTER I FAMILY MEMBER 17"/>
    <property type="match status" value="1"/>
</dbReference>
<dbReference type="PANTHER" id="PTHR43423:SF12">
    <property type="entry name" value="IRON EXPORT ATP-BINDING PROTEIN FETA-RELATED"/>
    <property type="match status" value="1"/>
</dbReference>
<dbReference type="Pfam" id="PF00005">
    <property type="entry name" value="ABC_tran"/>
    <property type="match status" value="1"/>
</dbReference>
<dbReference type="SMART" id="SM00382">
    <property type="entry name" value="AAA"/>
    <property type="match status" value="1"/>
</dbReference>
<dbReference type="SUPFAM" id="SSF52540">
    <property type="entry name" value="P-loop containing nucleoside triphosphate hydrolases"/>
    <property type="match status" value="1"/>
</dbReference>
<dbReference type="PROSITE" id="PS00211">
    <property type="entry name" value="ABC_TRANSPORTER_1"/>
    <property type="match status" value="1"/>
</dbReference>
<dbReference type="PROSITE" id="PS50893">
    <property type="entry name" value="ABC_TRANSPORTER_2"/>
    <property type="match status" value="1"/>
</dbReference>
<dbReference type="PROSITE" id="PS51238">
    <property type="entry name" value="PSTB"/>
    <property type="match status" value="1"/>
</dbReference>
<gene>
    <name evidence="1" type="primary">pstB1</name>
    <name type="ordered locus">YPA_2270</name>
</gene>
<comment type="function">
    <text evidence="1">Part of the ABC transporter complex PstSACB involved in phosphate import. Responsible for energy coupling to the transport system.</text>
</comment>
<comment type="catalytic activity">
    <reaction evidence="1">
        <text>phosphate(out) + ATP + H2O = ADP + 2 phosphate(in) + H(+)</text>
        <dbReference type="Rhea" id="RHEA:24440"/>
        <dbReference type="ChEBI" id="CHEBI:15377"/>
        <dbReference type="ChEBI" id="CHEBI:15378"/>
        <dbReference type="ChEBI" id="CHEBI:30616"/>
        <dbReference type="ChEBI" id="CHEBI:43474"/>
        <dbReference type="ChEBI" id="CHEBI:456216"/>
        <dbReference type="EC" id="7.3.2.1"/>
    </reaction>
</comment>
<comment type="subunit">
    <text evidence="1">The complex is composed of two ATP-binding proteins (PstB), two transmembrane proteins (PstC and PstA) and a solute-binding protein (PstS).</text>
</comment>
<comment type="subcellular location">
    <subcellularLocation>
        <location evidence="1">Cell inner membrane</location>
        <topology evidence="1">Peripheral membrane protein</topology>
    </subcellularLocation>
</comment>
<comment type="similarity">
    <text evidence="1">Belongs to the ABC transporter superfamily. Phosphate importer (TC 3.A.1.7) family.</text>
</comment>
<proteinExistence type="inferred from homology"/>
<evidence type="ECO:0000255" key="1">
    <source>
        <dbReference type="HAMAP-Rule" id="MF_01702"/>
    </source>
</evidence>
<reference key="1">
    <citation type="journal article" date="2006" name="J. Bacteriol.">
        <title>Complete genome sequence of Yersinia pestis strains Antiqua and Nepal516: evidence of gene reduction in an emerging pathogen.</title>
        <authorList>
            <person name="Chain P.S.G."/>
            <person name="Hu P."/>
            <person name="Malfatti S.A."/>
            <person name="Radnedge L."/>
            <person name="Larimer F."/>
            <person name="Vergez L.M."/>
            <person name="Worsham P."/>
            <person name="Chu M.C."/>
            <person name="Andersen G.L."/>
        </authorList>
    </citation>
    <scope>NUCLEOTIDE SEQUENCE [LARGE SCALE GENOMIC DNA]</scope>
    <source>
        <strain>Antiqua</strain>
    </source>
</reference>
<feature type="chain" id="PRO_0000272578" description="Phosphate import ATP-binding protein PstB 1">
    <location>
        <begin position="1"/>
        <end position="270"/>
    </location>
</feature>
<feature type="domain" description="ABC transporter" evidence="1">
    <location>
        <begin position="24"/>
        <end position="265"/>
    </location>
</feature>
<feature type="binding site" evidence="1">
    <location>
        <begin position="56"/>
        <end position="63"/>
    </location>
    <ligand>
        <name>ATP</name>
        <dbReference type="ChEBI" id="CHEBI:30616"/>
    </ligand>
</feature>
<organism>
    <name type="scientific">Yersinia pestis bv. Antiqua (strain Antiqua)</name>
    <dbReference type="NCBI Taxonomy" id="360102"/>
    <lineage>
        <taxon>Bacteria</taxon>
        <taxon>Pseudomonadati</taxon>
        <taxon>Pseudomonadota</taxon>
        <taxon>Gammaproteobacteria</taxon>
        <taxon>Enterobacterales</taxon>
        <taxon>Yersiniaceae</taxon>
        <taxon>Yersinia</taxon>
    </lineage>
</organism>
<protein>
    <recommendedName>
        <fullName evidence="1">Phosphate import ATP-binding protein PstB 1</fullName>
        <ecNumber evidence="1">7.3.2.1</ecNumber>
    </recommendedName>
    <alternativeName>
        <fullName evidence="1">ABC phosphate transporter 1</fullName>
    </alternativeName>
    <alternativeName>
        <fullName evidence="1">Phosphate-transporting ATPase 1</fullName>
    </alternativeName>
</protein>
<sequence length="270" mass="30695">MGLLTPNSLPLLDVQHLTDEQTALAVERLNLFYGDKQVLHDISFCVPKHRVTALIGPSGCGKSTLLRCFNRMNDLLDNCHFDGEIRLGDEIITDKTTDVAALRRRVGMVFQRPNPFPKSIYENVVYGLRLQGVRDRRVLDEAVERSLRAAALWHEVKDRLRENAFRLSSGQQQRLVIARAIAIEPEVLLLDEPTSALDPISTLTIEELITTLKQQYTVVLVTHNMQQAARVSDYTAFIHQGRLVEYNNTDALFTSPYQRQTEDYITGRYG</sequence>